<organism>
    <name type="scientific">Mus musculus</name>
    <name type="common">Mouse</name>
    <dbReference type="NCBI Taxonomy" id="10090"/>
    <lineage>
        <taxon>Eukaryota</taxon>
        <taxon>Metazoa</taxon>
        <taxon>Chordata</taxon>
        <taxon>Craniata</taxon>
        <taxon>Vertebrata</taxon>
        <taxon>Euteleostomi</taxon>
        <taxon>Mammalia</taxon>
        <taxon>Eutheria</taxon>
        <taxon>Euarchontoglires</taxon>
        <taxon>Glires</taxon>
        <taxon>Rodentia</taxon>
        <taxon>Myomorpha</taxon>
        <taxon>Muroidea</taxon>
        <taxon>Muridae</taxon>
        <taxon>Murinae</taxon>
        <taxon>Mus</taxon>
        <taxon>Mus</taxon>
    </lineage>
</organism>
<keyword id="KW-0597">Phosphoprotein</keyword>
<keyword id="KW-1185">Reference proteome</keyword>
<reference key="1">
    <citation type="journal article" date="2009" name="PLoS Biol.">
        <title>Lineage-specific biology revealed by a finished genome assembly of the mouse.</title>
        <authorList>
            <person name="Church D.M."/>
            <person name="Goodstadt L."/>
            <person name="Hillier L.W."/>
            <person name="Zody M.C."/>
            <person name="Goldstein S."/>
            <person name="She X."/>
            <person name="Bult C.J."/>
            <person name="Agarwala R."/>
            <person name="Cherry J.L."/>
            <person name="DiCuccio M."/>
            <person name="Hlavina W."/>
            <person name="Kapustin Y."/>
            <person name="Meric P."/>
            <person name="Maglott D."/>
            <person name="Birtle Z."/>
            <person name="Marques A.C."/>
            <person name="Graves T."/>
            <person name="Zhou S."/>
            <person name="Teague B."/>
            <person name="Potamousis K."/>
            <person name="Churas C."/>
            <person name="Place M."/>
            <person name="Herschleb J."/>
            <person name="Runnheim R."/>
            <person name="Forrest D."/>
            <person name="Amos-Landgraf J."/>
            <person name="Schwartz D.C."/>
            <person name="Cheng Z."/>
            <person name="Lindblad-Toh K."/>
            <person name="Eichler E.E."/>
            <person name="Ponting C.P."/>
        </authorList>
    </citation>
    <scope>NUCLEOTIDE SEQUENCE [LARGE SCALE GENOMIC DNA]</scope>
    <source>
        <strain>C57BL/6J</strain>
    </source>
</reference>
<reference evidence="4" key="2">
    <citation type="journal article" date="2004" name="Genome Res.">
        <title>The status, quality, and expansion of the NIH full-length cDNA project: the Mammalian Gene Collection (MGC).</title>
        <authorList>
            <consortium name="The MGC Project Team"/>
        </authorList>
    </citation>
    <scope>NUCLEOTIDE SEQUENCE [LARGE SCALE MRNA]</scope>
    <source>
        <strain evidence="4">FVB/N</strain>
        <tissue evidence="4">Liver</tissue>
    </source>
</reference>
<reference evidence="3 5" key="3">
    <citation type="submission" date="2005-02" db="EMBL/GenBank/DDBJ databases">
        <title>Prediction of the coding sequences of mouse homologues of KIAA gene. The complete nucleotide sequences of mouse KIAA-homologous cDNAs identified by screening of terminal sequences of cDNA clones randomly sampled from size-fractionated libraries.</title>
        <authorList>
            <person name="Okazaki N."/>
            <person name="Kikuno R.F."/>
            <person name="Ohara R."/>
            <person name="Inamoto S."/>
            <person name="Nagase T."/>
            <person name="Ohara O."/>
            <person name="Koga H."/>
        </authorList>
    </citation>
    <scope>NUCLEOTIDE SEQUENCE [LARGE SCALE MRNA] OF 269-434</scope>
    <source>
        <tissue evidence="5">Brain</tissue>
    </source>
</reference>
<reference key="4">
    <citation type="journal article" date="2010" name="Cell">
        <title>A tissue-specific atlas of mouse protein phosphorylation and expression.</title>
        <authorList>
            <person name="Huttlin E.L."/>
            <person name="Jedrychowski M.P."/>
            <person name="Elias J.E."/>
            <person name="Goswami T."/>
            <person name="Rad R."/>
            <person name="Beausoleil S.A."/>
            <person name="Villen J."/>
            <person name="Haas W."/>
            <person name="Sowa M.E."/>
            <person name="Gygi S.P."/>
        </authorList>
    </citation>
    <scope>IDENTIFICATION BY MASS SPECTROMETRY [LARGE SCALE ANALYSIS]</scope>
    <source>
        <tissue>Testis</tissue>
    </source>
</reference>
<protein>
    <recommendedName>
        <fullName evidence="6">Protein angel homolog 1</fullName>
    </recommendedName>
</protein>
<sequence length="667" mass="75254">MIASCLYYLLLPAARLFRFLSDAFFTCRKNALLAKSSSPQVEGNFAMAPRGPDQEECEGLLQQWREEGWNQTPSTASEGPLADKGLAESSLALLMDNSGEQDAASEDKWSSRQLSDLRAAENLNQPFPEVLGEEPLAEVEGPLWAAVPVQTGPQYADCAVLPMGAMAAEQWEEDPAMVAWSIAPEPMPQEETSMWPFEGLEQLQPPPMEIPYHEILWREWEDFSTQPDAQGLEAGDGPQFQFTLMSYNILAQDLMQQSSELYLHCHPDILNWNYRFANLMQEFQHWDPDILCLQEVQEDHYWEQLEPSLRMMGFTCFYKRRTGCKTDGCAVCYKPTRFRLLCASPVEYFRPGLELLNRDNVGLVLLLQPLVPEGLGQVSVAPLCVANTHVLYNPRRGDVKLAQMAILLAEVDKVARLSDGSHCPIILCGDLNSVPDSPLYNFIRDGELQYNGMPAWKVSGQEDFSHQLYQRKLQAPLWPSSLGITDCCQYVTSCHPKRSERLKYGRDFLLRFRFCDLACQRPVGLVLMEGVTDTKPDRPAGWAECIFEEEISELEPVFPRTIGTIQHCLHLTSVYTHFLPQHGCPEVTTMPLGLGMTVDYIFFSAESCENENRTDHRLDRDGTLKLLGRLSLLSEEILWAANGLPNPFYSSDHLCLLASFGMEVTAP</sequence>
<name>ANGE1_MOUSE</name>
<gene>
    <name evidence="6" type="primary">Angel1</name>
    <name evidence="5" type="synonym">Kiaa0759</name>
</gene>
<comment type="similarity">
    <text evidence="2">Belongs to the CCR4/nocturin family.</text>
</comment>
<dbReference type="EMBL" id="AC102689">
    <property type="status" value="NOT_ANNOTATED_CDS"/>
    <property type="molecule type" value="Genomic_DNA"/>
</dbReference>
<dbReference type="EMBL" id="BC019148">
    <property type="protein sequence ID" value="AAH19148.1"/>
    <property type="molecule type" value="mRNA"/>
</dbReference>
<dbReference type="EMBL" id="AK220354">
    <property type="protein sequence ID" value="BAD90417.1"/>
    <property type="molecule type" value="mRNA"/>
</dbReference>
<dbReference type="CCDS" id="CCDS26067.1"/>
<dbReference type="RefSeq" id="NP_653107.2">
    <property type="nucleotide sequence ID" value="NM_144524.2"/>
</dbReference>
<dbReference type="SMR" id="Q8VCU0"/>
<dbReference type="BioGRID" id="213025">
    <property type="interactions" value="1"/>
</dbReference>
<dbReference type="FunCoup" id="Q8VCU0">
    <property type="interactions" value="2521"/>
</dbReference>
<dbReference type="IntAct" id="Q8VCU0">
    <property type="interactions" value="1"/>
</dbReference>
<dbReference type="MINT" id="Q8VCU0"/>
<dbReference type="STRING" id="10090.ENSMUSP00000021682"/>
<dbReference type="PhosphoSitePlus" id="Q8VCU0"/>
<dbReference type="SwissPalm" id="Q8VCU0"/>
<dbReference type="CPTAC" id="non-CPTAC-3400"/>
<dbReference type="PaxDb" id="10090-ENSMUSP00000021682"/>
<dbReference type="ProteomicsDB" id="282096"/>
<dbReference type="Antibodypedia" id="58">
    <property type="antibodies" value="107 antibodies from 18 providers"/>
</dbReference>
<dbReference type="DNASU" id="68737"/>
<dbReference type="Ensembl" id="ENSMUST00000021682.9">
    <property type="protein sequence ID" value="ENSMUSP00000021682.9"/>
    <property type="gene ID" value="ENSMUSG00000021257.16"/>
</dbReference>
<dbReference type="GeneID" id="68737"/>
<dbReference type="KEGG" id="mmu:68737"/>
<dbReference type="UCSC" id="uc011ypj.1">
    <property type="organism name" value="mouse"/>
</dbReference>
<dbReference type="AGR" id="MGI:1915987"/>
<dbReference type="CTD" id="23357"/>
<dbReference type="MGI" id="MGI:1915987">
    <property type="gene designation" value="Angel1"/>
</dbReference>
<dbReference type="VEuPathDB" id="HostDB:ENSMUSG00000021257"/>
<dbReference type="eggNOG" id="KOG2338">
    <property type="taxonomic scope" value="Eukaryota"/>
</dbReference>
<dbReference type="GeneTree" id="ENSGT00940000159057"/>
<dbReference type="HOGENOM" id="CLU_016428_6_0_1"/>
<dbReference type="InParanoid" id="Q8VCU0"/>
<dbReference type="OMA" id="MIKSCKA"/>
<dbReference type="OrthoDB" id="10253982at2759"/>
<dbReference type="PhylomeDB" id="Q8VCU0"/>
<dbReference type="TreeFam" id="TF316126"/>
<dbReference type="BioGRID-ORCS" id="68737">
    <property type="hits" value="0 hits in 76 CRISPR screens"/>
</dbReference>
<dbReference type="ChiTaRS" id="Angel1">
    <property type="organism name" value="mouse"/>
</dbReference>
<dbReference type="PRO" id="PR:Q8VCU0"/>
<dbReference type="Proteomes" id="UP000000589">
    <property type="component" value="Chromosome 12"/>
</dbReference>
<dbReference type="RNAct" id="Q8VCU0">
    <property type="molecule type" value="protein"/>
</dbReference>
<dbReference type="Bgee" id="ENSMUSG00000021257">
    <property type="expression patterns" value="Expressed in spermatid and 188 other cell types or tissues"/>
</dbReference>
<dbReference type="GO" id="GO:0005801">
    <property type="term" value="C:cis-Golgi network"/>
    <property type="evidence" value="ECO:0000250"/>
    <property type="project" value="AgBase"/>
</dbReference>
<dbReference type="GO" id="GO:0005829">
    <property type="term" value="C:cytosol"/>
    <property type="evidence" value="ECO:0000250"/>
    <property type="project" value="AgBase"/>
</dbReference>
<dbReference type="GO" id="GO:0005783">
    <property type="term" value="C:endoplasmic reticulum"/>
    <property type="evidence" value="ECO:0000250"/>
    <property type="project" value="AgBase"/>
</dbReference>
<dbReference type="GO" id="GO:0005741">
    <property type="term" value="C:mitochondrial outer membrane"/>
    <property type="evidence" value="ECO:0007669"/>
    <property type="project" value="Ensembl"/>
</dbReference>
<dbReference type="GO" id="GO:0005634">
    <property type="term" value="C:nucleus"/>
    <property type="evidence" value="ECO:0000250"/>
    <property type="project" value="AgBase"/>
</dbReference>
<dbReference type="GO" id="GO:0048471">
    <property type="term" value="C:perinuclear region of cytoplasm"/>
    <property type="evidence" value="ECO:0000250"/>
    <property type="project" value="AgBase"/>
</dbReference>
<dbReference type="GO" id="GO:0003824">
    <property type="term" value="F:catalytic activity"/>
    <property type="evidence" value="ECO:0007669"/>
    <property type="project" value="InterPro"/>
</dbReference>
<dbReference type="GO" id="GO:0008190">
    <property type="term" value="F:eukaryotic initiation factor 4E binding"/>
    <property type="evidence" value="ECO:0000250"/>
    <property type="project" value="AgBase"/>
</dbReference>
<dbReference type="GO" id="GO:0019904">
    <property type="term" value="F:protein domain specific binding"/>
    <property type="evidence" value="ECO:0000250"/>
    <property type="project" value="AgBase"/>
</dbReference>
<dbReference type="FunFam" id="3.60.10.10:FF:000025">
    <property type="entry name" value="Angel homolog 1 (Drosophila)"/>
    <property type="match status" value="1"/>
</dbReference>
<dbReference type="Gene3D" id="3.60.10.10">
    <property type="entry name" value="Endonuclease/exonuclease/phosphatase"/>
    <property type="match status" value="1"/>
</dbReference>
<dbReference type="InterPro" id="IPR050410">
    <property type="entry name" value="CCR4/nocturin_mRNA_transcr"/>
</dbReference>
<dbReference type="InterPro" id="IPR036691">
    <property type="entry name" value="Endo/exonu/phosph_ase_sf"/>
</dbReference>
<dbReference type="InterPro" id="IPR005135">
    <property type="entry name" value="Endo/exonuclease/phosphatase"/>
</dbReference>
<dbReference type="PANTHER" id="PTHR12121">
    <property type="entry name" value="CARBON CATABOLITE REPRESSOR PROTEIN 4"/>
    <property type="match status" value="1"/>
</dbReference>
<dbReference type="PANTHER" id="PTHR12121:SF28">
    <property type="entry name" value="PROTEIN ANGEL HOMOLOG 1"/>
    <property type="match status" value="1"/>
</dbReference>
<dbReference type="Pfam" id="PF03372">
    <property type="entry name" value="Exo_endo_phos"/>
    <property type="match status" value="1"/>
</dbReference>
<dbReference type="SUPFAM" id="SSF56219">
    <property type="entry name" value="DNase I-like"/>
    <property type="match status" value="1"/>
</dbReference>
<proteinExistence type="evidence at protein level"/>
<accession>Q8VCU0</accession>
<accession>Q5DU16</accession>
<feature type="chain" id="PRO_0000356223" description="Protein angel homolog 1">
    <location>
        <begin position="1"/>
        <end position="667"/>
    </location>
</feature>
<feature type="modified residue" description="Phosphoserine" evidence="1">
    <location>
        <position position="77"/>
    </location>
</feature>
<feature type="modified residue" description="Phosphoserine" evidence="1">
    <location>
        <position position="105"/>
    </location>
</feature>
<feature type="sequence conflict" description="In Ref. 2; AAH19148." evidence="3" ref="2">
    <original>N</original>
    <variation>D</variation>
    <location>
        <position position="124"/>
    </location>
</feature>
<feature type="sequence conflict" description="In Ref. 3; BAD90417." evidence="3" ref="3">
    <original>DLNSV</original>
    <variation>AATQL</variation>
    <location>
        <begin position="430"/>
        <end position="434"/>
    </location>
</feature>
<evidence type="ECO:0000250" key="1">
    <source>
        <dbReference type="UniProtKB" id="B2RYM0"/>
    </source>
</evidence>
<evidence type="ECO:0000255" key="2"/>
<evidence type="ECO:0000305" key="3"/>
<evidence type="ECO:0000312" key="4">
    <source>
        <dbReference type="EMBL" id="AAH19148.1"/>
    </source>
</evidence>
<evidence type="ECO:0000312" key="5">
    <source>
        <dbReference type="EMBL" id="BAD90417.1"/>
    </source>
</evidence>
<evidence type="ECO:0000312" key="6">
    <source>
        <dbReference type="MGI" id="MGI:1915987"/>
    </source>
</evidence>